<keyword id="KW-0687">Ribonucleoprotein</keyword>
<keyword id="KW-0689">Ribosomal protein</keyword>
<keyword id="KW-0694">RNA-binding</keyword>
<keyword id="KW-0699">rRNA-binding</keyword>
<accession>A1JIT0</accession>
<reference key="1">
    <citation type="journal article" date="2006" name="PLoS Genet.">
        <title>The complete genome sequence and comparative genome analysis of the high pathogenicity Yersinia enterocolitica strain 8081.</title>
        <authorList>
            <person name="Thomson N.R."/>
            <person name="Howard S."/>
            <person name="Wren B.W."/>
            <person name="Holden M.T.G."/>
            <person name="Crossman L."/>
            <person name="Challis G.L."/>
            <person name="Churcher C."/>
            <person name="Mungall K."/>
            <person name="Brooks K."/>
            <person name="Chillingworth T."/>
            <person name="Feltwell T."/>
            <person name="Abdellah Z."/>
            <person name="Hauser H."/>
            <person name="Jagels K."/>
            <person name="Maddison M."/>
            <person name="Moule S."/>
            <person name="Sanders M."/>
            <person name="Whitehead S."/>
            <person name="Quail M.A."/>
            <person name="Dougan G."/>
            <person name="Parkhill J."/>
            <person name="Prentice M.B."/>
        </authorList>
    </citation>
    <scope>NUCLEOTIDE SEQUENCE [LARGE SCALE GENOMIC DNA]</scope>
    <source>
        <strain>NCTC 13174 / 8081</strain>
    </source>
</reference>
<organism>
    <name type="scientific">Yersinia enterocolitica serotype O:8 / biotype 1B (strain NCTC 13174 / 8081)</name>
    <dbReference type="NCBI Taxonomy" id="393305"/>
    <lineage>
        <taxon>Bacteria</taxon>
        <taxon>Pseudomonadati</taxon>
        <taxon>Pseudomonadota</taxon>
        <taxon>Gammaproteobacteria</taxon>
        <taxon>Enterobacterales</taxon>
        <taxon>Yersiniaceae</taxon>
        <taxon>Yersinia</taxon>
    </lineage>
</organism>
<protein>
    <recommendedName>
        <fullName evidence="1">Small ribosomal subunit protein bS18</fullName>
    </recommendedName>
    <alternativeName>
        <fullName evidence="2">30S ribosomal protein S18</fullName>
    </alternativeName>
</protein>
<evidence type="ECO:0000255" key="1">
    <source>
        <dbReference type="HAMAP-Rule" id="MF_00270"/>
    </source>
</evidence>
<evidence type="ECO:0000305" key="2"/>
<sequence>MARYFRRRKFCRFTAEGVVEIDYKDIATLKNYITESGKIVPSRITGTRAKYQRQLARCIKRARYLSLLPYTDRHQ</sequence>
<name>RS18_YERE8</name>
<proteinExistence type="inferred from homology"/>
<dbReference type="EMBL" id="AM286415">
    <property type="protein sequence ID" value="CAL10521.1"/>
    <property type="molecule type" value="Genomic_DNA"/>
</dbReference>
<dbReference type="RefSeq" id="WP_002210155.1">
    <property type="nucleotide sequence ID" value="NC_008800.1"/>
</dbReference>
<dbReference type="RefSeq" id="YP_001004767.1">
    <property type="nucleotide sequence ID" value="NC_008800.1"/>
</dbReference>
<dbReference type="SMR" id="A1JIT0"/>
<dbReference type="GeneID" id="98391335"/>
<dbReference type="KEGG" id="yen:YE0394"/>
<dbReference type="PATRIC" id="fig|393305.7.peg.488"/>
<dbReference type="eggNOG" id="COG0238">
    <property type="taxonomic scope" value="Bacteria"/>
</dbReference>
<dbReference type="HOGENOM" id="CLU_148710_2_2_6"/>
<dbReference type="OrthoDB" id="9812008at2"/>
<dbReference type="PRO" id="PR:A1JIT0"/>
<dbReference type="Proteomes" id="UP000000642">
    <property type="component" value="Chromosome"/>
</dbReference>
<dbReference type="GO" id="GO:0022627">
    <property type="term" value="C:cytosolic small ribosomal subunit"/>
    <property type="evidence" value="ECO:0007669"/>
    <property type="project" value="TreeGrafter"/>
</dbReference>
<dbReference type="GO" id="GO:0070181">
    <property type="term" value="F:small ribosomal subunit rRNA binding"/>
    <property type="evidence" value="ECO:0007669"/>
    <property type="project" value="TreeGrafter"/>
</dbReference>
<dbReference type="GO" id="GO:0003735">
    <property type="term" value="F:structural constituent of ribosome"/>
    <property type="evidence" value="ECO:0007669"/>
    <property type="project" value="InterPro"/>
</dbReference>
<dbReference type="GO" id="GO:0006412">
    <property type="term" value="P:translation"/>
    <property type="evidence" value="ECO:0007669"/>
    <property type="project" value="UniProtKB-UniRule"/>
</dbReference>
<dbReference type="FunFam" id="4.10.640.10:FF:000001">
    <property type="entry name" value="30S ribosomal protein S18"/>
    <property type="match status" value="1"/>
</dbReference>
<dbReference type="Gene3D" id="4.10.640.10">
    <property type="entry name" value="Ribosomal protein S18"/>
    <property type="match status" value="1"/>
</dbReference>
<dbReference type="HAMAP" id="MF_00270">
    <property type="entry name" value="Ribosomal_bS18"/>
    <property type="match status" value="1"/>
</dbReference>
<dbReference type="InterPro" id="IPR001648">
    <property type="entry name" value="Ribosomal_bS18"/>
</dbReference>
<dbReference type="InterPro" id="IPR018275">
    <property type="entry name" value="Ribosomal_bS18_CS"/>
</dbReference>
<dbReference type="InterPro" id="IPR036870">
    <property type="entry name" value="Ribosomal_bS18_sf"/>
</dbReference>
<dbReference type="NCBIfam" id="TIGR00165">
    <property type="entry name" value="S18"/>
    <property type="match status" value="1"/>
</dbReference>
<dbReference type="PANTHER" id="PTHR13479">
    <property type="entry name" value="30S RIBOSOMAL PROTEIN S18"/>
    <property type="match status" value="1"/>
</dbReference>
<dbReference type="PANTHER" id="PTHR13479:SF40">
    <property type="entry name" value="SMALL RIBOSOMAL SUBUNIT PROTEIN BS18M"/>
    <property type="match status" value="1"/>
</dbReference>
<dbReference type="Pfam" id="PF01084">
    <property type="entry name" value="Ribosomal_S18"/>
    <property type="match status" value="1"/>
</dbReference>
<dbReference type="PRINTS" id="PR00974">
    <property type="entry name" value="RIBOSOMALS18"/>
</dbReference>
<dbReference type="SUPFAM" id="SSF46911">
    <property type="entry name" value="Ribosomal protein S18"/>
    <property type="match status" value="1"/>
</dbReference>
<dbReference type="PROSITE" id="PS00057">
    <property type="entry name" value="RIBOSOMAL_S18"/>
    <property type="match status" value="1"/>
</dbReference>
<feature type="chain" id="PRO_1000003661" description="Small ribosomal subunit protein bS18">
    <location>
        <begin position="1"/>
        <end position="75"/>
    </location>
</feature>
<comment type="function">
    <text evidence="1">Binds as a heterodimer with protein bS6 to the central domain of the 16S rRNA, where it helps stabilize the platform of the 30S subunit.</text>
</comment>
<comment type="subunit">
    <text evidence="1">Part of the 30S ribosomal subunit. Forms a tight heterodimer with protein bS6.</text>
</comment>
<comment type="similarity">
    <text evidence="1">Belongs to the bacterial ribosomal protein bS18 family.</text>
</comment>
<gene>
    <name evidence="1" type="primary">rpsR</name>
    <name type="ordered locus">YE0394</name>
</gene>